<dbReference type="EMBL" id="X03986">
    <property type="protein sequence ID" value="CAA27624.1"/>
    <property type="molecule type" value="mRNA"/>
</dbReference>
<dbReference type="EMBL" id="M17640">
    <property type="protein sequence ID" value="AAB53942.1"/>
    <property type="molecule type" value="mRNA"/>
</dbReference>
<dbReference type="EMBL" id="AK029177">
    <property type="protein sequence ID" value="BAC26337.1"/>
    <property type="molecule type" value="mRNA"/>
</dbReference>
<dbReference type="CCDS" id="CCDS16132.1"/>
<dbReference type="PIR" id="A24383">
    <property type="entry name" value="A24383"/>
</dbReference>
<dbReference type="PIR" id="I49458">
    <property type="entry name" value="I49458"/>
</dbReference>
<dbReference type="RefSeq" id="NP_031415.2">
    <property type="nucleotide sequence ID" value="NM_007389.5"/>
</dbReference>
<dbReference type="PDB" id="2QC1">
    <property type="method" value="X-ray"/>
    <property type="resolution" value="1.94 A"/>
    <property type="chains" value="B=21-231"/>
</dbReference>
<dbReference type="PDB" id="5HBV">
    <property type="method" value="X-ray"/>
    <property type="resolution" value="2.70 A"/>
    <property type="chains" value="B=22-231"/>
</dbReference>
<dbReference type="PDBsum" id="2QC1"/>
<dbReference type="PDBsum" id="5HBV"/>
<dbReference type="SMR" id="P04756"/>
<dbReference type="BioGRID" id="197931">
    <property type="interactions" value="5"/>
</dbReference>
<dbReference type="ComplexPortal" id="CPX-252">
    <property type="entry name" value="Muscle-type nicotinic acetylcholine receptor complex, alpha1-beta1-delta-gamma"/>
</dbReference>
<dbReference type="ComplexPortal" id="CPX-257">
    <property type="entry name" value="Muscle-type nicotinic acetylcholine receptor complex, alpha1-beta1-delta-epsilon"/>
</dbReference>
<dbReference type="DIP" id="DIP-59594N"/>
<dbReference type="FunCoup" id="P04756">
    <property type="interactions" value="446"/>
</dbReference>
<dbReference type="IntAct" id="P04756">
    <property type="interactions" value="2"/>
</dbReference>
<dbReference type="MINT" id="P04756"/>
<dbReference type="STRING" id="10090.ENSMUSP00000028515"/>
<dbReference type="BindingDB" id="P04756"/>
<dbReference type="ChEMBL" id="CHEMBL3038460"/>
<dbReference type="ChEMBL" id="CHEMBL3137264"/>
<dbReference type="GlyCosmos" id="P04756">
    <property type="glycosylation" value="1 site, No reported glycans"/>
</dbReference>
<dbReference type="GlyGen" id="P04756">
    <property type="glycosylation" value="1 site"/>
</dbReference>
<dbReference type="iPTMnet" id="P04756"/>
<dbReference type="PhosphoSitePlus" id="P04756"/>
<dbReference type="SwissPalm" id="P04756"/>
<dbReference type="PaxDb" id="10090-ENSMUSP00000028515"/>
<dbReference type="ProteomicsDB" id="285920"/>
<dbReference type="ABCD" id="P04756">
    <property type="antibodies" value="5 sequenced antibodies"/>
</dbReference>
<dbReference type="Antibodypedia" id="19487">
    <property type="antibodies" value="443 antibodies from 37 providers"/>
</dbReference>
<dbReference type="DNASU" id="11435"/>
<dbReference type="Ensembl" id="ENSMUST00000028515.4">
    <property type="protein sequence ID" value="ENSMUSP00000028515.4"/>
    <property type="gene ID" value="ENSMUSG00000027107.4"/>
</dbReference>
<dbReference type="GeneID" id="11435"/>
<dbReference type="KEGG" id="mmu:11435"/>
<dbReference type="UCSC" id="uc008kcy.2">
    <property type="organism name" value="mouse"/>
</dbReference>
<dbReference type="AGR" id="MGI:87885"/>
<dbReference type="CTD" id="1134"/>
<dbReference type="MGI" id="MGI:87885">
    <property type="gene designation" value="Chrna1"/>
</dbReference>
<dbReference type="VEuPathDB" id="HostDB:ENSMUSG00000027107"/>
<dbReference type="eggNOG" id="KOG3645">
    <property type="taxonomic scope" value="Eukaryota"/>
</dbReference>
<dbReference type="GeneTree" id="ENSGT00940000156851"/>
<dbReference type="HOGENOM" id="CLU_018074_1_0_1"/>
<dbReference type="InParanoid" id="P04756"/>
<dbReference type="OMA" id="GHITWNP"/>
<dbReference type="OrthoDB" id="5975154at2759"/>
<dbReference type="PhylomeDB" id="P04756"/>
<dbReference type="TreeFam" id="TF315605"/>
<dbReference type="Reactome" id="R-MMU-629594">
    <property type="pathway name" value="Highly calcium permeable postsynaptic nicotinic acetylcholine receptors"/>
</dbReference>
<dbReference type="Reactome" id="R-MMU-629597">
    <property type="pathway name" value="Highly calcium permeable nicotinic acetylcholine receptors"/>
</dbReference>
<dbReference type="BioGRID-ORCS" id="11435">
    <property type="hits" value="3 hits in 79 CRISPR screens"/>
</dbReference>
<dbReference type="EvolutionaryTrace" id="P04756"/>
<dbReference type="PRO" id="PR:P04756"/>
<dbReference type="Proteomes" id="UP000000589">
    <property type="component" value="Chromosome 2"/>
</dbReference>
<dbReference type="RNAct" id="P04756">
    <property type="molecule type" value="protein"/>
</dbReference>
<dbReference type="Bgee" id="ENSMUSG00000027107">
    <property type="expression patterns" value="Expressed in tarsal region and 68 other cell types or tissues"/>
</dbReference>
<dbReference type="ExpressionAtlas" id="P04756">
    <property type="expression patterns" value="baseline and differential"/>
</dbReference>
<dbReference type="GO" id="GO:0005892">
    <property type="term" value="C:acetylcholine-gated channel complex"/>
    <property type="evidence" value="ECO:0000353"/>
    <property type="project" value="MGI"/>
</dbReference>
<dbReference type="GO" id="GO:0009986">
    <property type="term" value="C:cell surface"/>
    <property type="evidence" value="ECO:0000314"/>
    <property type="project" value="MGI"/>
</dbReference>
<dbReference type="GO" id="GO:0016020">
    <property type="term" value="C:membrane"/>
    <property type="evidence" value="ECO:0000314"/>
    <property type="project" value="MGI"/>
</dbReference>
<dbReference type="GO" id="GO:0031594">
    <property type="term" value="C:neuromuscular junction"/>
    <property type="evidence" value="ECO:0000314"/>
    <property type="project" value="MGI"/>
</dbReference>
<dbReference type="GO" id="GO:0005886">
    <property type="term" value="C:plasma membrane"/>
    <property type="evidence" value="ECO:0000314"/>
    <property type="project" value="MGI"/>
</dbReference>
<dbReference type="GO" id="GO:0099634">
    <property type="term" value="C:postsynaptic specialization membrane"/>
    <property type="evidence" value="ECO:0000314"/>
    <property type="project" value="SynGO"/>
</dbReference>
<dbReference type="GO" id="GO:0022848">
    <property type="term" value="F:acetylcholine-gated monoatomic cation-selective channel activity"/>
    <property type="evidence" value="ECO:0000266"/>
    <property type="project" value="MGI"/>
</dbReference>
<dbReference type="GO" id="GO:0004888">
    <property type="term" value="F:transmembrane signaling receptor activity"/>
    <property type="evidence" value="ECO:0007669"/>
    <property type="project" value="InterPro"/>
</dbReference>
<dbReference type="GO" id="GO:0046716">
    <property type="term" value="P:muscle cell cellular homeostasis"/>
    <property type="evidence" value="ECO:0007669"/>
    <property type="project" value="Ensembl"/>
</dbReference>
<dbReference type="GO" id="GO:0007528">
    <property type="term" value="P:neuromuscular junction development"/>
    <property type="evidence" value="ECO:0000266"/>
    <property type="project" value="MGI"/>
</dbReference>
<dbReference type="GO" id="GO:0007274">
    <property type="term" value="P:neuromuscular synaptic transmission"/>
    <property type="evidence" value="ECO:0000266"/>
    <property type="project" value="MGI"/>
</dbReference>
<dbReference type="GO" id="GO:0070050">
    <property type="term" value="P:neuron cellular homeostasis"/>
    <property type="evidence" value="ECO:0007669"/>
    <property type="project" value="Ensembl"/>
</dbReference>
<dbReference type="GO" id="GO:0019228">
    <property type="term" value="P:neuronal action potential"/>
    <property type="evidence" value="ECO:0007669"/>
    <property type="project" value="Ensembl"/>
</dbReference>
<dbReference type="GO" id="GO:0042391">
    <property type="term" value="P:regulation of membrane potential"/>
    <property type="evidence" value="ECO:0000316"/>
    <property type="project" value="MGI"/>
</dbReference>
<dbReference type="GO" id="GO:0003009">
    <property type="term" value="P:skeletal muscle contraction"/>
    <property type="evidence" value="ECO:0007669"/>
    <property type="project" value="Ensembl"/>
</dbReference>
<dbReference type="GO" id="GO:0048630">
    <property type="term" value="P:skeletal muscle tissue growth"/>
    <property type="evidence" value="ECO:0007669"/>
    <property type="project" value="Ensembl"/>
</dbReference>
<dbReference type="GO" id="GO:0007271">
    <property type="term" value="P:synaptic transmission, cholinergic"/>
    <property type="evidence" value="ECO:0007669"/>
    <property type="project" value="GOC"/>
</dbReference>
<dbReference type="CDD" id="cd19014">
    <property type="entry name" value="LGIC_ECD_nAChR_A1"/>
    <property type="match status" value="1"/>
</dbReference>
<dbReference type="CDD" id="cd19064">
    <property type="entry name" value="LGIC_TM_nAChR"/>
    <property type="match status" value="1"/>
</dbReference>
<dbReference type="FunFam" id="1.20.58.390:FF:000013">
    <property type="entry name" value="Putative acetylcholine receptor subunit alpha"/>
    <property type="match status" value="1"/>
</dbReference>
<dbReference type="FunFam" id="1.20.58.390:FF:000016">
    <property type="entry name" value="Putative acetylcholine receptor subunit alpha"/>
    <property type="match status" value="1"/>
</dbReference>
<dbReference type="FunFam" id="2.70.170.10:FF:000019">
    <property type="entry name" value="Putative acetylcholine receptor subunit alpha"/>
    <property type="match status" value="1"/>
</dbReference>
<dbReference type="Gene3D" id="2.70.170.10">
    <property type="entry name" value="Neurotransmitter-gated ion-channel ligand-binding domain"/>
    <property type="match status" value="1"/>
</dbReference>
<dbReference type="Gene3D" id="1.20.58.390">
    <property type="entry name" value="Neurotransmitter-gated ion-channel transmembrane domain"/>
    <property type="match status" value="2"/>
</dbReference>
<dbReference type="InterPro" id="IPR006202">
    <property type="entry name" value="Neur_chan_lig-bd"/>
</dbReference>
<dbReference type="InterPro" id="IPR036734">
    <property type="entry name" value="Neur_chan_lig-bd_sf"/>
</dbReference>
<dbReference type="InterPro" id="IPR006201">
    <property type="entry name" value="Neur_channel"/>
</dbReference>
<dbReference type="InterPro" id="IPR036719">
    <property type="entry name" value="Neuro-gated_channel_TM_sf"/>
</dbReference>
<dbReference type="InterPro" id="IPR038050">
    <property type="entry name" value="Neuro_actylchol_rec"/>
</dbReference>
<dbReference type="InterPro" id="IPR006029">
    <property type="entry name" value="Neurotrans-gated_channel_TM"/>
</dbReference>
<dbReference type="InterPro" id="IPR018000">
    <property type="entry name" value="Neurotransmitter_ion_chnl_CS"/>
</dbReference>
<dbReference type="InterPro" id="IPR002394">
    <property type="entry name" value="Nicotinic_acetylcholine_rcpt"/>
</dbReference>
<dbReference type="NCBIfam" id="TIGR00860">
    <property type="entry name" value="LIC"/>
    <property type="match status" value="1"/>
</dbReference>
<dbReference type="PANTHER" id="PTHR18945">
    <property type="entry name" value="NEUROTRANSMITTER GATED ION CHANNEL"/>
    <property type="match status" value="1"/>
</dbReference>
<dbReference type="Pfam" id="PF02931">
    <property type="entry name" value="Neur_chan_LBD"/>
    <property type="match status" value="1"/>
</dbReference>
<dbReference type="Pfam" id="PF02932">
    <property type="entry name" value="Neur_chan_memb"/>
    <property type="match status" value="1"/>
</dbReference>
<dbReference type="PRINTS" id="PR00254">
    <property type="entry name" value="NICOTINICR"/>
</dbReference>
<dbReference type="PRINTS" id="PR00252">
    <property type="entry name" value="NRIONCHANNEL"/>
</dbReference>
<dbReference type="SUPFAM" id="SSF90112">
    <property type="entry name" value="Neurotransmitter-gated ion-channel transmembrane pore"/>
    <property type="match status" value="1"/>
</dbReference>
<dbReference type="SUPFAM" id="SSF63712">
    <property type="entry name" value="Nicotinic receptor ligand binding domain-like"/>
    <property type="match status" value="1"/>
</dbReference>
<dbReference type="PROSITE" id="PS00236">
    <property type="entry name" value="NEUROTR_ION_CHANNEL"/>
    <property type="match status" value="1"/>
</dbReference>
<name>ACHA_MOUSE</name>
<gene>
    <name type="primary">Chrna1</name>
    <name type="synonym">Acra</name>
</gene>
<organism>
    <name type="scientific">Mus musculus</name>
    <name type="common">Mouse</name>
    <dbReference type="NCBI Taxonomy" id="10090"/>
    <lineage>
        <taxon>Eukaryota</taxon>
        <taxon>Metazoa</taxon>
        <taxon>Chordata</taxon>
        <taxon>Craniata</taxon>
        <taxon>Vertebrata</taxon>
        <taxon>Euteleostomi</taxon>
        <taxon>Mammalia</taxon>
        <taxon>Eutheria</taxon>
        <taxon>Euarchontoglires</taxon>
        <taxon>Glires</taxon>
        <taxon>Rodentia</taxon>
        <taxon>Myomorpha</taxon>
        <taxon>Muroidea</taxon>
        <taxon>Muridae</taxon>
        <taxon>Murinae</taxon>
        <taxon>Mus</taxon>
        <taxon>Mus</taxon>
    </lineage>
</organism>
<accession>P04756</accession>
<sequence length="457" mass="51939">MELSTVLLLLGLCSAGLVLGSEHETRLVAKLFEDYSSVVRPVEDHREIVQVTVGLQLIQLINVDEVNQIVTTNVRLKQQWVDYNLKWNPDDYGGVKKIHIPSEKIWRPDVVLYNNADGDFAIVKFTKVLLDYTGHITWTPPAIFKSYCEIIVTHFPFDEQNCSMKLGTWTYDGSVVAINPESDQPDLSNFMESGEWVIKEARGWKHWVFYSCCPTTPYLDITYHFVMQRLPLYFIVNVIIPCLLFSFLTSLVFYLPTDSGEKMTLSISVLLSLTVFLLVIVELIPSTSSAVPLIGKYMLFTMVFVIASIIITVIVINTHHRSPSTHIMPEWVRKVFIDTIPNIMFFSTMKRPSRDKQEKRIFTEDIDISDISGKPGPPPMGFHSPLIKHPEVKSAIEGVKYIAETMKSDQESNNAAEEWKYVAMVMDHILLGVFMLVCLIGTLAVFAGRLIELHQQG</sequence>
<evidence type="ECO:0000250" key="1">
    <source>
        <dbReference type="UniProtKB" id="P02708"/>
    </source>
</evidence>
<evidence type="ECO:0000250" key="2">
    <source>
        <dbReference type="UniProtKB" id="P02709"/>
    </source>
</evidence>
<evidence type="ECO:0000255" key="3"/>
<evidence type="ECO:0000269" key="4">
    <source>
    </source>
</evidence>
<evidence type="ECO:0000305" key="5"/>
<evidence type="ECO:0007829" key="6">
    <source>
        <dbReference type="PDB" id="2QC1"/>
    </source>
</evidence>
<reference key="1">
    <citation type="journal article" date="1986" name="Nucleic Acids Res.">
        <title>Nucleotide sequence of the mouse muscle nicotinic acetylcholine receptor alpha subunit.</title>
        <authorList>
            <person name="Isenberg K.E."/>
            <person name="Mudd J."/>
            <person name="Shah V."/>
            <person name="Merlie J.P."/>
        </authorList>
    </citation>
    <scope>NUCLEOTIDE SEQUENCE [MRNA]</scope>
</reference>
<reference key="2">
    <citation type="submission" date="1997-05" db="EMBL/GenBank/DDBJ databases">
        <authorList>
            <person name="Boulter J."/>
        </authorList>
    </citation>
    <scope>NUCLEOTIDE SEQUENCE [MRNA]</scope>
</reference>
<reference key="3">
    <citation type="journal article" date="2005" name="Science">
        <title>The transcriptional landscape of the mammalian genome.</title>
        <authorList>
            <person name="Carninci P."/>
            <person name="Kasukawa T."/>
            <person name="Katayama S."/>
            <person name="Gough J."/>
            <person name="Frith M.C."/>
            <person name="Maeda N."/>
            <person name="Oyama R."/>
            <person name="Ravasi T."/>
            <person name="Lenhard B."/>
            <person name="Wells C."/>
            <person name="Kodzius R."/>
            <person name="Shimokawa K."/>
            <person name="Bajic V.B."/>
            <person name="Brenner S.E."/>
            <person name="Batalov S."/>
            <person name="Forrest A.R."/>
            <person name="Zavolan M."/>
            <person name="Davis M.J."/>
            <person name="Wilming L.G."/>
            <person name="Aidinis V."/>
            <person name="Allen J.E."/>
            <person name="Ambesi-Impiombato A."/>
            <person name="Apweiler R."/>
            <person name="Aturaliya R.N."/>
            <person name="Bailey T.L."/>
            <person name="Bansal M."/>
            <person name="Baxter L."/>
            <person name="Beisel K.W."/>
            <person name="Bersano T."/>
            <person name="Bono H."/>
            <person name="Chalk A.M."/>
            <person name="Chiu K.P."/>
            <person name="Choudhary V."/>
            <person name="Christoffels A."/>
            <person name="Clutterbuck D.R."/>
            <person name="Crowe M.L."/>
            <person name="Dalla E."/>
            <person name="Dalrymple B.P."/>
            <person name="de Bono B."/>
            <person name="Della Gatta G."/>
            <person name="di Bernardo D."/>
            <person name="Down T."/>
            <person name="Engstrom P."/>
            <person name="Fagiolini M."/>
            <person name="Faulkner G."/>
            <person name="Fletcher C.F."/>
            <person name="Fukushima T."/>
            <person name="Furuno M."/>
            <person name="Futaki S."/>
            <person name="Gariboldi M."/>
            <person name="Georgii-Hemming P."/>
            <person name="Gingeras T.R."/>
            <person name="Gojobori T."/>
            <person name="Green R.E."/>
            <person name="Gustincich S."/>
            <person name="Harbers M."/>
            <person name="Hayashi Y."/>
            <person name="Hensch T.K."/>
            <person name="Hirokawa N."/>
            <person name="Hill D."/>
            <person name="Huminiecki L."/>
            <person name="Iacono M."/>
            <person name="Ikeo K."/>
            <person name="Iwama A."/>
            <person name="Ishikawa T."/>
            <person name="Jakt M."/>
            <person name="Kanapin A."/>
            <person name="Katoh M."/>
            <person name="Kawasawa Y."/>
            <person name="Kelso J."/>
            <person name="Kitamura H."/>
            <person name="Kitano H."/>
            <person name="Kollias G."/>
            <person name="Krishnan S.P."/>
            <person name="Kruger A."/>
            <person name="Kummerfeld S.K."/>
            <person name="Kurochkin I.V."/>
            <person name="Lareau L.F."/>
            <person name="Lazarevic D."/>
            <person name="Lipovich L."/>
            <person name="Liu J."/>
            <person name="Liuni S."/>
            <person name="McWilliam S."/>
            <person name="Madan Babu M."/>
            <person name="Madera M."/>
            <person name="Marchionni L."/>
            <person name="Matsuda H."/>
            <person name="Matsuzawa S."/>
            <person name="Miki H."/>
            <person name="Mignone F."/>
            <person name="Miyake S."/>
            <person name="Morris K."/>
            <person name="Mottagui-Tabar S."/>
            <person name="Mulder N."/>
            <person name="Nakano N."/>
            <person name="Nakauchi H."/>
            <person name="Ng P."/>
            <person name="Nilsson R."/>
            <person name="Nishiguchi S."/>
            <person name="Nishikawa S."/>
            <person name="Nori F."/>
            <person name="Ohara O."/>
            <person name="Okazaki Y."/>
            <person name="Orlando V."/>
            <person name="Pang K.C."/>
            <person name="Pavan W.J."/>
            <person name="Pavesi G."/>
            <person name="Pesole G."/>
            <person name="Petrovsky N."/>
            <person name="Piazza S."/>
            <person name="Reed J."/>
            <person name="Reid J.F."/>
            <person name="Ring B.Z."/>
            <person name="Ringwald M."/>
            <person name="Rost B."/>
            <person name="Ruan Y."/>
            <person name="Salzberg S.L."/>
            <person name="Sandelin A."/>
            <person name="Schneider C."/>
            <person name="Schoenbach C."/>
            <person name="Sekiguchi K."/>
            <person name="Semple C.A."/>
            <person name="Seno S."/>
            <person name="Sessa L."/>
            <person name="Sheng Y."/>
            <person name="Shibata Y."/>
            <person name="Shimada H."/>
            <person name="Shimada K."/>
            <person name="Silva D."/>
            <person name="Sinclair B."/>
            <person name="Sperling S."/>
            <person name="Stupka E."/>
            <person name="Sugiura K."/>
            <person name="Sultana R."/>
            <person name="Takenaka Y."/>
            <person name="Taki K."/>
            <person name="Tammoja K."/>
            <person name="Tan S.L."/>
            <person name="Tang S."/>
            <person name="Taylor M.S."/>
            <person name="Tegner J."/>
            <person name="Teichmann S.A."/>
            <person name="Ueda H.R."/>
            <person name="van Nimwegen E."/>
            <person name="Verardo R."/>
            <person name="Wei C.L."/>
            <person name="Yagi K."/>
            <person name="Yamanishi H."/>
            <person name="Zabarovsky E."/>
            <person name="Zhu S."/>
            <person name="Zimmer A."/>
            <person name="Hide W."/>
            <person name="Bult C."/>
            <person name="Grimmond S.M."/>
            <person name="Teasdale R.D."/>
            <person name="Liu E.T."/>
            <person name="Brusic V."/>
            <person name="Quackenbush J."/>
            <person name="Wahlestedt C."/>
            <person name="Mattick J.S."/>
            <person name="Hume D.A."/>
            <person name="Kai C."/>
            <person name="Sasaki D."/>
            <person name="Tomaru Y."/>
            <person name="Fukuda S."/>
            <person name="Kanamori-Katayama M."/>
            <person name="Suzuki M."/>
            <person name="Aoki J."/>
            <person name="Arakawa T."/>
            <person name="Iida J."/>
            <person name="Imamura K."/>
            <person name="Itoh M."/>
            <person name="Kato T."/>
            <person name="Kawaji H."/>
            <person name="Kawagashira N."/>
            <person name="Kawashima T."/>
            <person name="Kojima M."/>
            <person name="Kondo S."/>
            <person name="Konno H."/>
            <person name="Nakano K."/>
            <person name="Ninomiya N."/>
            <person name="Nishio T."/>
            <person name="Okada M."/>
            <person name="Plessy C."/>
            <person name="Shibata K."/>
            <person name="Shiraki T."/>
            <person name="Suzuki S."/>
            <person name="Tagami M."/>
            <person name="Waki K."/>
            <person name="Watahiki A."/>
            <person name="Okamura-Oho Y."/>
            <person name="Suzuki H."/>
            <person name="Kawai J."/>
            <person name="Hayashizaki Y."/>
        </authorList>
    </citation>
    <scope>NUCLEOTIDE SEQUENCE [LARGE SCALE MRNA]</scope>
    <source>
        <strain>C57BL/6J</strain>
        <tissue>Head</tissue>
    </source>
</reference>
<reference key="4">
    <citation type="journal article" date="1985" name="J. Neurosci.">
        <title>Isolation of a clone coding for the alpha-subunit of a mouse acetylcholine receptor.</title>
        <authorList>
            <person name="Boulter J."/>
            <person name="Luyten W."/>
            <person name="Evans K."/>
            <person name="Mason P."/>
            <person name="Ballivet M."/>
            <person name="Goldman D.J."/>
            <person name="Stengelin S.F."/>
            <person name="Martin G."/>
            <person name="Heinemann S.F."/>
            <person name="Patrick J."/>
        </authorList>
    </citation>
    <scope>NUCLEOTIDE SEQUENCE [MRNA] OF 13-457</scope>
</reference>
<reference key="5">
    <citation type="journal article" date="2007" name="Nat. Neurosci.">
        <title>Crystal structure of the extracellular domain of nAChR alpha1 bound to alpha-bungarotoxin at 1.94 A resolution.</title>
        <authorList>
            <person name="Dellisanti C.D."/>
            <person name="Yao Y."/>
            <person name="Stroud J.C."/>
            <person name="Wang Z.Z."/>
            <person name="Chen L."/>
        </authorList>
    </citation>
    <scope>X-RAY CRYSTALLOGRAPHY (1.94 ANGSTROMS) OF 21-231 IN COMPLEX WITH ALPHA-BUNGAROTOXIN</scope>
    <scope>DISULFIDE BONDS</scope>
    <scope>GLYCOSYLATION AT ASN-161</scope>
</reference>
<protein>
    <recommendedName>
        <fullName>Acetylcholine receptor subunit alpha</fullName>
    </recommendedName>
</protein>
<comment type="function">
    <text evidence="1">Upon acetylcholine binding, the AChR responds by an extensive change in conformation that affects all subunits and leads to opening of an ion-conducting channel across the plasma membrane.</text>
</comment>
<comment type="catalytic activity">
    <reaction evidence="2">
        <text>K(+)(in) = K(+)(out)</text>
        <dbReference type="Rhea" id="RHEA:29463"/>
        <dbReference type="ChEBI" id="CHEBI:29103"/>
    </reaction>
</comment>
<comment type="catalytic activity">
    <reaction evidence="2">
        <text>Na(+)(in) = Na(+)(out)</text>
        <dbReference type="Rhea" id="RHEA:34963"/>
        <dbReference type="ChEBI" id="CHEBI:29101"/>
    </reaction>
</comment>
<comment type="subunit">
    <text evidence="1 4">One of the alpha chains that assemble within the acetylcholine receptor, a pentamer of two alpha chains, a beta, a delta, and a gamma (in immature muscle) or epsilon (in mature muscle) chains (PubMed:17643119). The muscle heteropentamer composed of alpha-1, beta-1, delta, epsilon subunits interacts with the alpha-conotoxin ImII (By similarity).</text>
</comment>
<comment type="subcellular location">
    <subcellularLocation>
        <location evidence="1">Postsynaptic cell membrane</location>
        <topology evidence="3">Multi-pass membrane protein</topology>
    </subcellularLocation>
    <subcellularLocation>
        <location evidence="1">Cell membrane</location>
        <topology evidence="3">Multi-pass membrane protein</topology>
    </subcellularLocation>
</comment>
<comment type="similarity">
    <text evidence="5">Belongs to the ligand-gated ion channel (TC 1.A.9) family. Acetylcholine receptor (TC 1.A.9.1) subfamily. Alpha-1/CHRNA1 sub-subfamily.</text>
</comment>
<proteinExistence type="evidence at protein level"/>
<feature type="signal peptide">
    <location>
        <begin position="1"/>
        <end position="20"/>
    </location>
</feature>
<feature type="chain" id="PRO_0000000306" description="Acetylcholine receptor subunit alpha">
    <location>
        <begin position="21"/>
        <end position="457"/>
    </location>
</feature>
<feature type="topological domain" description="Extracellular">
    <location>
        <begin position="21"/>
        <end position="230"/>
    </location>
</feature>
<feature type="transmembrane region" description="Helical">
    <location>
        <begin position="231"/>
        <end position="255"/>
    </location>
</feature>
<feature type="transmembrane region" description="Helical">
    <location>
        <begin position="263"/>
        <end position="281"/>
    </location>
</feature>
<feature type="transmembrane region" description="Helical">
    <location>
        <begin position="297"/>
        <end position="316"/>
    </location>
</feature>
<feature type="topological domain" description="Cytoplasmic">
    <location>
        <begin position="317"/>
        <end position="428"/>
    </location>
</feature>
<feature type="transmembrane region" description="Helical">
    <location>
        <begin position="429"/>
        <end position="447"/>
    </location>
</feature>
<feature type="glycosylation site" description="N-linked (GlcNAc...) asparagine" evidence="4">
    <location>
        <position position="161"/>
    </location>
</feature>
<feature type="disulfide bond" evidence="4">
    <location>
        <begin position="148"/>
        <end position="162"/>
    </location>
</feature>
<feature type="disulfide bond" description="Associated with receptor activation" evidence="4">
    <location>
        <begin position="212"/>
        <end position="213"/>
    </location>
</feature>
<feature type="sequence conflict" description="In Ref. 2; AAB53942 and 4; no nucleotide entry." evidence="5" ref="2 4">
    <original>C</original>
    <variation>S</variation>
    <location>
        <position position="13"/>
    </location>
</feature>
<feature type="helix" evidence="6">
    <location>
        <begin position="22"/>
        <end position="32"/>
    </location>
</feature>
<feature type="strand" evidence="6">
    <location>
        <begin position="37"/>
        <end position="39"/>
    </location>
</feature>
<feature type="strand" evidence="6">
    <location>
        <begin position="49"/>
        <end position="64"/>
    </location>
</feature>
<feature type="turn" evidence="6">
    <location>
        <begin position="65"/>
        <end position="68"/>
    </location>
</feature>
<feature type="strand" evidence="6">
    <location>
        <begin position="69"/>
        <end position="81"/>
    </location>
</feature>
<feature type="helix" evidence="6">
    <location>
        <begin position="89"/>
        <end position="92"/>
    </location>
</feature>
<feature type="strand" evidence="6">
    <location>
        <begin position="97"/>
        <end position="100"/>
    </location>
</feature>
<feature type="helix" evidence="6">
    <location>
        <begin position="102"/>
        <end position="104"/>
    </location>
</feature>
<feature type="strand" evidence="6">
    <location>
        <begin position="110"/>
        <end position="112"/>
    </location>
</feature>
<feature type="turn" evidence="6">
    <location>
        <begin position="116"/>
        <end position="118"/>
    </location>
</feature>
<feature type="strand" evidence="6">
    <location>
        <begin position="128"/>
        <end position="131"/>
    </location>
</feature>
<feature type="strand" evidence="6">
    <location>
        <begin position="135"/>
        <end position="138"/>
    </location>
</feature>
<feature type="strand" evidence="6">
    <location>
        <begin position="141"/>
        <end position="150"/>
    </location>
</feature>
<feature type="strand" evidence="6">
    <location>
        <begin position="153"/>
        <end position="156"/>
    </location>
</feature>
<feature type="strand" evidence="6">
    <location>
        <begin position="159"/>
        <end position="170"/>
    </location>
</feature>
<feature type="turn" evidence="6">
    <location>
        <begin position="173"/>
        <end position="175"/>
    </location>
</feature>
<feature type="strand" evidence="6">
    <location>
        <begin position="176"/>
        <end position="181"/>
    </location>
</feature>
<feature type="strand" evidence="6">
    <location>
        <begin position="194"/>
        <end position="210"/>
    </location>
</feature>
<feature type="strand" evidence="6">
    <location>
        <begin position="218"/>
        <end position="229"/>
    </location>
</feature>
<keyword id="KW-0002">3D-structure</keyword>
<keyword id="KW-1003">Cell membrane</keyword>
<keyword id="KW-1015">Disulfide bond</keyword>
<keyword id="KW-0325">Glycoprotein</keyword>
<keyword id="KW-0407">Ion channel</keyword>
<keyword id="KW-0406">Ion transport</keyword>
<keyword id="KW-1071">Ligand-gated ion channel</keyword>
<keyword id="KW-0472">Membrane</keyword>
<keyword id="KW-0628">Postsynaptic cell membrane</keyword>
<keyword id="KW-0675">Receptor</keyword>
<keyword id="KW-1185">Reference proteome</keyword>
<keyword id="KW-0732">Signal</keyword>
<keyword id="KW-0770">Synapse</keyword>
<keyword id="KW-0812">Transmembrane</keyword>
<keyword id="KW-1133">Transmembrane helix</keyword>
<keyword id="KW-0813">Transport</keyword>